<proteinExistence type="inferred from homology"/>
<feature type="chain" id="PRO_1000013679" description="S-adenosylmethionine decarboxylase beta chain" evidence="1">
    <location>
        <begin position="1"/>
        <end position="62"/>
    </location>
</feature>
<feature type="chain" id="PRO_0000315028" description="S-adenosylmethionine decarboxylase alpha chain" evidence="1">
    <location>
        <begin position="63"/>
        <end position="125"/>
    </location>
</feature>
<feature type="active site" description="Schiff-base intermediate with substrate; via pyruvic acid" evidence="1">
    <location>
        <position position="63"/>
    </location>
</feature>
<feature type="active site" description="Proton acceptor; for processing activity" evidence="1">
    <location>
        <position position="68"/>
    </location>
</feature>
<feature type="active site" description="Proton donor; for catalytic activity" evidence="1">
    <location>
        <position position="83"/>
    </location>
</feature>
<feature type="site" description="Cleavage (non-hydrolytic); by autolysis" evidence="1">
    <location>
        <begin position="62"/>
        <end position="63"/>
    </location>
</feature>
<feature type="modified residue" description="Pyruvic acid (Ser); by autocatalysis" evidence="1">
    <location>
        <position position="63"/>
    </location>
</feature>
<dbReference type="EC" id="4.1.1.50" evidence="1"/>
<dbReference type="EMBL" id="CP000232">
    <property type="protein sequence ID" value="ABC19596.1"/>
    <property type="molecule type" value="Genomic_DNA"/>
</dbReference>
<dbReference type="RefSeq" id="YP_430139.1">
    <property type="nucleotide sequence ID" value="NC_007644.1"/>
</dbReference>
<dbReference type="SMR" id="Q2RIZ3"/>
<dbReference type="STRING" id="264732.Moth_1282"/>
<dbReference type="EnsemblBacteria" id="ABC19596">
    <property type="protein sequence ID" value="ABC19596"/>
    <property type="gene ID" value="Moth_1282"/>
</dbReference>
<dbReference type="KEGG" id="mta:Moth_1282"/>
<dbReference type="PATRIC" id="fig|264732.11.peg.1375"/>
<dbReference type="eggNOG" id="COG1586">
    <property type="taxonomic scope" value="Bacteria"/>
</dbReference>
<dbReference type="HOGENOM" id="CLU_125470_2_3_9"/>
<dbReference type="OrthoDB" id="9793120at2"/>
<dbReference type="UniPathway" id="UPA00331">
    <property type="reaction ID" value="UER00451"/>
</dbReference>
<dbReference type="GO" id="GO:0005829">
    <property type="term" value="C:cytosol"/>
    <property type="evidence" value="ECO:0007669"/>
    <property type="project" value="TreeGrafter"/>
</dbReference>
<dbReference type="GO" id="GO:0004014">
    <property type="term" value="F:adenosylmethionine decarboxylase activity"/>
    <property type="evidence" value="ECO:0007669"/>
    <property type="project" value="UniProtKB-UniRule"/>
</dbReference>
<dbReference type="GO" id="GO:0008295">
    <property type="term" value="P:spermidine biosynthetic process"/>
    <property type="evidence" value="ECO:0007669"/>
    <property type="project" value="UniProtKB-UniRule"/>
</dbReference>
<dbReference type="FunFam" id="3.30.360.110:FF:000001">
    <property type="entry name" value="S-adenosylmethionine decarboxylase proenzyme"/>
    <property type="match status" value="1"/>
</dbReference>
<dbReference type="Gene3D" id="3.30.160.750">
    <property type="match status" value="1"/>
</dbReference>
<dbReference type="Gene3D" id="3.30.360.110">
    <property type="entry name" value="S-adenosylmethionine decarboxylase domain"/>
    <property type="match status" value="1"/>
</dbReference>
<dbReference type="HAMAP" id="MF_00464">
    <property type="entry name" value="AdoMetDC_1"/>
    <property type="match status" value="1"/>
</dbReference>
<dbReference type="InterPro" id="IPR042286">
    <property type="entry name" value="AdoMetDC_C"/>
</dbReference>
<dbReference type="InterPro" id="IPR003826">
    <property type="entry name" value="AdoMetDC_fam_prok"/>
</dbReference>
<dbReference type="InterPro" id="IPR042284">
    <property type="entry name" value="AdoMetDC_N"/>
</dbReference>
<dbReference type="InterPro" id="IPR016067">
    <property type="entry name" value="S-AdoMet_deCO2ase_core"/>
</dbReference>
<dbReference type="InterPro" id="IPR017716">
    <property type="entry name" value="S-AdoMet_deCOase_pro-enz"/>
</dbReference>
<dbReference type="NCBIfam" id="TIGR03330">
    <property type="entry name" value="SAM_DCase_Bsu"/>
    <property type="match status" value="1"/>
</dbReference>
<dbReference type="PANTHER" id="PTHR33866">
    <property type="entry name" value="S-ADENOSYLMETHIONINE DECARBOXYLASE PROENZYME"/>
    <property type="match status" value="1"/>
</dbReference>
<dbReference type="PANTHER" id="PTHR33866:SF2">
    <property type="entry name" value="S-ADENOSYLMETHIONINE DECARBOXYLASE PROENZYME"/>
    <property type="match status" value="1"/>
</dbReference>
<dbReference type="Pfam" id="PF02675">
    <property type="entry name" value="AdoMet_dc"/>
    <property type="match status" value="1"/>
</dbReference>
<dbReference type="SUPFAM" id="SSF56276">
    <property type="entry name" value="S-adenosylmethionine decarboxylase"/>
    <property type="match status" value="1"/>
</dbReference>
<name>SPEH_MOOTA</name>
<organism>
    <name type="scientific">Moorella thermoacetica (strain ATCC 39073 / JCM 9320)</name>
    <dbReference type="NCBI Taxonomy" id="264732"/>
    <lineage>
        <taxon>Bacteria</taxon>
        <taxon>Bacillati</taxon>
        <taxon>Bacillota</taxon>
        <taxon>Clostridia</taxon>
        <taxon>Moorellales</taxon>
        <taxon>Moorellaceae</taxon>
        <taxon>Moorella</taxon>
    </lineage>
</organism>
<accession>Q2RIZ3</accession>
<keyword id="KW-0068">Autocatalytic cleavage</keyword>
<keyword id="KW-0210">Decarboxylase</keyword>
<keyword id="KW-0456">Lyase</keyword>
<keyword id="KW-0620">Polyamine biosynthesis</keyword>
<keyword id="KW-0670">Pyruvate</keyword>
<keyword id="KW-0949">S-adenosyl-L-methionine</keyword>
<keyword id="KW-0704">Schiff base</keyword>
<keyword id="KW-0745">Spermidine biosynthesis</keyword>
<keyword id="KW-0865">Zymogen</keyword>
<evidence type="ECO:0000255" key="1">
    <source>
        <dbReference type="HAMAP-Rule" id="MF_00464"/>
    </source>
</evidence>
<gene>
    <name evidence="1" type="primary">speH</name>
    <name type="ordered locus">Moth_1282</name>
</gene>
<reference key="1">
    <citation type="journal article" date="2008" name="Environ. Microbiol.">
        <title>The complete genome sequence of Moorella thermoacetica (f. Clostridium thermoaceticum).</title>
        <authorList>
            <person name="Pierce E."/>
            <person name="Xie G."/>
            <person name="Barabote R.D."/>
            <person name="Saunders E."/>
            <person name="Han C.S."/>
            <person name="Detter J.C."/>
            <person name="Richardson P."/>
            <person name="Brettin T.S."/>
            <person name="Das A."/>
            <person name="Ljungdahl L.G."/>
            <person name="Ragsdale S.W."/>
        </authorList>
    </citation>
    <scope>NUCLEOTIDE SEQUENCE [LARGE SCALE GENOMIC DNA]</scope>
    <source>
        <strain>ATCC 39073 / JCM 9320</strain>
    </source>
</reference>
<sequence>MRALGRHVLAEVYGCSFEILNDIKKVEEIMVKAALEAGAEIREVCFHKFSPQGVSGVVVISESHLAIHTWPELGYAAVDVFTCGERVNPWDACRYLTEKFKAADVHATEIERGVIEPPQAAAVNL</sequence>
<comment type="function">
    <text evidence="1">Catalyzes the decarboxylation of S-adenosylmethionine to S-adenosylmethioninamine (dcAdoMet), the propylamine donor required for the synthesis of the polyamines spermine and spermidine from the diamine putrescine.</text>
</comment>
<comment type="catalytic activity">
    <reaction evidence="1">
        <text>S-adenosyl-L-methionine + H(+) = S-adenosyl 3-(methylsulfanyl)propylamine + CO2</text>
        <dbReference type="Rhea" id="RHEA:15981"/>
        <dbReference type="ChEBI" id="CHEBI:15378"/>
        <dbReference type="ChEBI" id="CHEBI:16526"/>
        <dbReference type="ChEBI" id="CHEBI:57443"/>
        <dbReference type="ChEBI" id="CHEBI:59789"/>
        <dbReference type="EC" id="4.1.1.50"/>
    </reaction>
</comment>
<comment type="cofactor">
    <cofactor evidence="1">
        <name>pyruvate</name>
        <dbReference type="ChEBI" id="CHEBI:15361"/>
    </cofactor>
    <text evidence="1">Binds 1 pyruvoyl group covalently per subunit.</text>
</comment>
<comment type="pathway">
    <text evidence="1">Amine and polyamine biosynthesis; S-adenosylmethioninamine biosynthesis; S-adenosylmethioninamine from S-adenosyl-L-methionine: step 1/1.</text>
</comment>
<comment type="subunit">
    <text evidence="1">Heterotetramer of two alpha and two beta chains arranged as a dimer of alpha/beta heterodimers.</text>
</comment>
<comment type="PTM">
    <text evidence="1">Is synthesized initially as an inactive proenzyme. Formation of the active enzyme involves a self-maturation process in which the active site pyruvoyl group is generated from an internal serine residue via an autocatalytic post-translational modification. Two non-identical subunits are generated from the proenzyme in this reaction, and the pyruvate is formed at the N-terminus of the alpha chain, which is derived from the carboxyl end of the proenzyme. The post-translation cleavage follows an unusual pathway, termed non-hydrolytic serinolysis, in which the side chain hydroxyl group of the serine supplies its oxygen atom to form the C-terminus of the beta chain, while the remainder of the serine residue undergoes an oxidative deamination to produce ammonia and the pyruvoyl group blocking the N-terminus of the alpha chain.</text>
</comment>
<comment type="similarity">
    <text evidence="1">Belongs to the prokaryotic AdoMetDC family. Type 1 subfamily.</text>
</comment>
<protein>
    <recommendedName>
        <fullName evidence="1">S-adenosylmethionine decarboxylase proenzyme</fullName>
        <shortName evidence="1">AdoMetDC</shortName>
        <shortName evidence="1">SAMDC</shortName>
        <ecNumber evidence="1">4.1.1.50</ecNumber>
    </recommendedName>
    <component>
        <recommendedName>
            <fullName evidence="1">S-adenosylmethionine decarboxylase beta chain</fullName>
        </recommendedName>
    </component>
    <component>
        <recommendedName>
            <fullName evidence="1">S-adenosylmethionine decarboxylase alpha chain</fullName>
        </recommendedName>
    </component>
</protein>